<evidence type="ECO:0000250" key="1">
    <source>
        <dbReference type="UniProtKB" id="P0A2W5"/>
    </source>
</evidence>
<evidence type="ECO:0000255" key="2">
    <source>
        <dbReference type="PROSITE-ProRule" id="PRU00258"/>
    </source>
</evidence>
<evidence type="ECO:0000269" key="3">
    <source>
    </source>
</evidence>
<evidence type="ECO:0000269" key="4">
    <source>
    </source>
</evidence>
<evidence type="ECO:0000303" key="5">
    <source>
    </source>
</evidence>
<evidence type="ECO:0000303" key="6">
    <source>
    </source>
</evidence>
<evidence type="ECO:0000305" key="7">
    <source>
    </source>
</evidence>
<evidence type="ECO:0000305" key="8">
    <source>
    </source>
</evidence>
<evidence type="ECO:0007829" key="9">
    <source>
        <dbReference type="PDB" id="5JDX"/>
    </source>
</evidence>
<evidence type="ECO:0007829" key="10">
    <source>
        <dbReference type="PDB" id="7THN"/>
    </source>
</evidence>
<keyword id="KW-0002">3D-structure</keyword>
<keyword id="KW-0596">Phosphopantetheine</keyword>
<keyword id="KW-0597">Phosphoprotein</keyword>
<dbReference type="EMBL" id="AJ833001">
    <property type="protein sequence ID" value="CAH55635.1"/>
    <property type="molecule type" value="Genomic_DNA"/>
</dbReference>
<dbReference type="RefSeq" id="WP_021014645.1">
    <property type="nucleotide sequence ID" value="NZ_CP025084.1"/>
</dbReference>
<dbReference type="PDB" id="5JDX">
    <property type="method" value="NMR"/>
    <property type="chains" value="A=1-87"/>
</dbReference>
<dbReference type="PDB" id="7THN">
    <property type="method" value="X-ray"/>
    <property type="resolution" value="1.60 A"/>
    <property type="chains" value="E=1-87"/>
</dbReference>
<dbReference type="PDB" id="7THQ">
    <property type="method" value="X-ray"/>
    <property type="resolution" value="2.46 A"/>
    <property type="chains" value="C/E=1-87"/>
</dbReference>
<dbReference type="PDBsum" id="5JDX"/>
<dbReference type="PDBsum" id="7THN"/>
<dbReference type="PDBsum" id="7THQ"/>
<dbReference type="BMRB" id="Q5W265"/>
<dbReference type="SMR" id="Q5W265"/>
<dbReference type="STRING" id="104623.Ser39006_01375"/>
<dbReference type="KEGG" id="ag:CAH55635"/>
<dbReference type="eggNOG" id="COG0236">
    <property type="taxonomic scope" value="Bacteria"/>
</dbReference>
<dbReference type="OrthoDB" id="5877692at2"/>
<dbReference type="UniPathway" id="UPA01072"/>
<dbReference type="GO" id="GO:0017000">
    <property type="term" value="P:antibiotic biosynthetic process"/>
    <property type="evidence" value="ECO:0000315"/>
    <property type="project" value="UniProtKB"/>
</dbReference>
<dbReference type="Gene3D" id="1.10.1200.10">
    <property type="entry name" value="ACP-like"/>
    <property type="match status" value="1"/>
</dbReference>
<dbReference type="InterPro" id="IPR036736">
    <property type="entry name" value="ACP-like_sf"/>
</dbReference>
<dbReference type="InterPro" id="IPR009081">
    <property type="entry name" value="PP-bd_ACP"/>
</dbReference>
<dbReference type="SUPFAM" id="SSF47336">
    <property type="entry name" value="ACP-like"/>
    <property type="match status" value="1"/>
</dbReference>
<dbReference type="PROSITE" id="PS50075">
    <property type="entry name" value="CARRIER"/>
    <property type="match status" value="1"/>
</dbReference>
<feature type="chain" id="PRO_0000436244" description="Probable acyl carrier protein PigG">
    <location>
        <begin position="1"/>
        <end position="87"/>
    </location>
</feature>
<feature type="domain" description="Carrier" evidence="2">
    <location>
        <begin position="1"/>
        <end position="78"/>
    </location>
</feature>
<feature type="modified residue" description="O-(pantetheine 4'-phosphoryl)serine" evidence="1 2">
    <location>
        <position position="36"/>
    </location>
</feature>
<feature type="helix" evidence="10">
    <location>
        <begin position="2"/>
        <end position="14"/>
    </location>
</feature>
<feature type="strand" evidence="9">
    <location>
        <begin position="23"/>
        <end position="26"/>
    </location>
</feature>
<feature type="turn" evidence="10">
    <location>
        <begin position="28"/>
        <end position="32"/>
    </location>
</feature>
<feature type="helix" evidence="10">
    <location>
        <begin position="36"/>
        <end position="38"/>
    </location>
</feature>
<feature type="helix" evidence="10">
    <location>
        <begin position="39"/>
        <end position="50"/>
    </location>
</feature>
<feature type="turn" evidence="10">
    <location>
        <begin position="56"/>
        <end position="58"/>
    </location>
</feature>
<feature type="helix" evidence="10">
    <location>
        <begin position="61"/>
        <end position="64"/>
    </location>
</feature>
<feature type="helix" evidence="10">
    <location>
        <begin position="67"/>
        <end position="77"/>
    </location>
</feature>
<organism>
    <name type="scientific">Serratia sp. (strain ATCC 39006)</name>
    <name type="common">Prodigiosinella confusarubida</name>
    <dbReference type="NCBI Taxonomy" id="104623"/>
    <lineage>
        <taxon>Bacteria</taxon>
        <taxon>Pseudomonadati</taxon>
        <taxon>Pseudomonadota</taxon>
        <taxon>Gammaproteobacteria</taxon>
        <taxon>Enterobacterales</taxon>
        <taxon>Pectobacteriaceae</taxon>
        <taxon>Prodigiosinella</taxon>
    </lineage>
</organism>
<sequence>MLESKLINHIATQFLDGEKDGLDSQTPLFELNIVDSAAIFDLVDFLRQESKVSIGMQEIHPANFATVQSMVALVQRLKAHPEQGGAA</sequence>
<accession>Q5W265</accession>
<proteinExistence type="evidence at protein level"/>
<protein>
    <recommendedName>
        <fullName evidence="6">Probable acyl carrier protein PigG</fullName>
    </recommendedName>
    <alternativeName>
        <fullName evidence="6">Peptidyl carrier protein</fullName>
        <shortName evidence="6">PCP</shortName>
    </alternativeName>
</protein>
<name>PIGG_SERS3</name>
<gene>
    <name evidence="5" type="primary">pigG</name>
</gene>
<comment type="function">
    <text evidence="3 4">Involved in the biosynthesis of 4-methoxy-2,2'-bipyrrole-5-carbaldehyde (MBC), one of the terminal products involved in the biosynthesis of the red antibiotic prodigiosin (Pig). Carrier of the L-prolyl group transferred from L-prolyl-AMP by PigI.</text>
</comment>
<comment type="pathway">
    <text evidence="7 8">Antibiotic biosynthesis; prodigiosin biosynthesis.</text>
</comment>
<comment type="disruption phenotype">
    <text evidence="3">Cells lacking this gene show a white phenotype and produce 2-methyl-3-n-amyl-pyrrole (MAP).</text>
</comment>
<reference key="1">
    <citation type="journal article" date="2004" name="Microbiology">
        <title>The Serratia gene cluster encoding biosynthesis of the red antibiotic, prodigiosin, shows species- and strain-dependent genome context variation.</title>
        <authorList>
            <person name="Harris A.K."/>
            <person name="Williamson N.R."/>
            <person name="Slater H."/>
            <person name="Cox A."/>
            <person name="Abbasi S."/>
            <person name="Foulds I."/>
            <person name="Simonsen H.T."/>
            <person name="Leeper F.J."/>
            <person name="Salmond G.P."/>
        </authorList>
    </citation>
    <scope>NUCLEOTIDE SEQUENCE [GENOMIC DNA]</scope>
    <source>
        <strain>ATCC 39006 / SC 11482</strain>
    </source>
</reference>
<reference key="2">
    <citation type="journal article" date="2005" name="Mol. Microbiol.">
        <title>Biosynthesis of the red antibiotic, prodigiosin, in Serratia: identification of a novel 2-methyl-3-n-amyl-pyrrole (MAP) assembly pathway, definition of the terminal condensing enzyme, and implications for undecylprodigiosin biosynthesis in Streptomyces.</title>
        <authorList>
            <person name="Williamson N.R."/>
            <person name="Simonsen H.T."/>
            <person name="Ahmed R.A."/>
            <person name="Goldet G."/>
            <person name="Slater H."/>
            <person name="Woodley L."/>
            <person name="Leeper F.J."/>
            <person name="Salmond G.P."/>
        </authorList>
    </citation>
    <scope>FUNCTION</scope>
    <scope>DISRUPTION PHENOTYPE</scope>
    <scope>PATHWAY</scope>
    <source>
        <strain>ATCC 39006 / SC 11482</strain>
    </source>
</reference>
<reference key="3">
    <citation type="journal article" date="2006" name="J. Am. Chem. Soc.">
        <title>Protein assembly line components in prodigiosin biosynthesis: characterization of PigA,G,H,I,J.</title>
        <authorList>
            <person name="Garneau-Tsodikova S."/>
            <person name="Dorrestein P.C."/>
            <person name="Kelleher N.L."/>
            <person name="Walsh C.T."/>
        </authorList>
    </citation>
    <scope>FUNCTION</scope>
    <scope>PATHWAY</scope>
    <source>
        <strain>ATCC 39006 / SC 11482</strain>
    </source>
</reference>